<proteinExistence type="inferred from homology"/>
<protein>
    <recommendedName>
        <fullName evidence="1">Peptide chain release factor 1</fullName>
        <shortName evidence="1">RF-1</shortName>
    </recommendedName>
</protein>
<comment type="function">
    <text evidence="1">Peptide chain release factor 1 directs the termination of translation in response to the peptide chain termination codons UAG and UAA.</text>
</comment>
<comment type="subcellular location">
    <subcellularLocation>
        <location evidence="1">Cytoplasm</location>
    </subcellularLocation>
</comment>
<comment type="PTM">
    <text evidence="1">Methylated by PrmC. Methylation increases the termination efficiency of RF1.</text>
</comment>
<comment type="similarity">
    <text evidence="1">Belongs to the prokaryotic/mitochondrial release factor family.</text>
</comment>
<name>RF1_BRUMB</name>
<dbReference type="EMBL" id="CP001488">
    <property type="protein sequence ID" value="ACO01587.1"/>
    <property type="molecule type" value="Genomic_DNA"/>
</dbReference>
<dbReference type="RefSeq" id="WP_004686702.1">
    <property type="nucleotide sequence ID" value="NC_012441.1"/>
</dbReference>
<dbReference type="SMR" id="C0RFB5"/>
<dbReference type="GeneID" id="29594610"/>
<dbReference type="KEGG" id="bmi:BMEA_A1923"/>
<dbReference type="HOGENOM" id="CLU_036856_0_1_5"/>
<dbReference type="Proteomes" id="UP000001748">
    <property type="component" value="Chromosome I"/>
</dbReference>
<dbReference type="GO" id="GO:0005737">
    <property type="term" value="C:cytoplasm"/>
    <property type="evidence" value="ECO:0007669"/>
    <property type="project" value="UniProtKB-SubCell"/>
</dbReference>
<dbReference type="GO" id="GO:0016149">
    <property type="term" value="F:translation release factor activity, codon specific"/>
    <property type="evidence" value="ECO:0007669"/>
    <property type="project" value="UniProtKB-UniRule"/>
</dbReference>
<dbReference type="FunFam" id="3.30.160.20:FF:000004">
    <property type="entry name" value="Peptide chain release factor 1"/>
    <property type="match status" value="1"/>
</dbReference>
<dbReference type="FunFam" id="3.30.70.1660:FF:000002">
    <property type="entry name" value="Peptide chain release factor 1"/>
    <property type="match status" value="1"/>
</dbReference>
<dbReference type="FunFam" id="3.30.70.1660:FF:000004">
    <property type="entry name" value="Peptide chain release factor 1"/>
    <property type="match status" value="1"/>
</dbReference>
<dbReference type="Gene3D" id="3.30.160.20">
    <property type="match status" value="1"/>
</dbReference>
<dbReference type="Gene3D" id="3.30.70.1660">
    <property type="match status" value="2"/>
</dbReference>
<dbReference type="Gene3D" id="6.10.140.1950">
    <property type="match status" value="1"/>
</dbReference>
<dbReference type="HAMAP" id="MF_00093">
    <property type="entry name" value="Rel_fac_1"/>
    <property type="match status" value="1"/>
</dbReference>
<dbReference type="InterPro" id="IPR005139">
    <property type="entry name" value="PCRF"/>
</dbReference>
<dbReference type="InterPro" id="IPR000352">
    <property type="entry name" value="Pep_chain_release_fac_I"/>
</dbReference>
<dbReference type="InterPro" id="IPR045853">
    <property type="entry name" value="Pep_chain_release_fac_I_sf"/>
</dbReference>
<dbReference type="InterPro" id="IPR050057">
    <property type="entry name" value="Prokaryotic/Mito_RF"/>
</dbReference>
<dbReference type="InterPro" id="IPR004373">
    <property type="entry name" value="RF-1"/>
</dbReference>
<dbReference type="NCBIfam" id="TIGR00019">
    <property type="entry name" value="prfA"/>
    <property type="match status" value="1"/>
</dbReference>
<dbReference type="NCBIfam" id="NF001859">
    <property type="entry name" value="PRK00591.1"/>
    <property type="match status" value="1"/>
</dbReference>
<dbReference type="PANTHER" id="PTHR43804">
    <property type="entry name" value="LD18447P"/>
    <property type="match status" value="1"/>
</dbReference>
<dbReference type="PANTHER" id="PTHR43804:SF7">
    <property type="entry name" value="LD18447P"/>
    <property type="match status" value="1"/>
</dbReference>
<dbReference type="Pfam" id="PF03462">
    <property type="entry name" value="PCRF"/>
    <property type="match status" value="1"/>
</dbReference>
<dbReference type="Pfam" id="PF00472">
    <property type="entry name" value="RF-1"/>
    <property type="match status" value="1"/>
</dbReference>
<dbReference type="SMART" id="SM00937">
    <property type="entry name" value="PCRF"/>
    <property type="match status" value="1"/>
</dbReference>
<dbReference type="SUPFAM" id="SSF75620">
    <property type="entry name" value="Release factor"/>
    <property type="match status" value="1"/>
</dbReference>
<dbReference type="PROSITE" id="PS00745">
    <property type="entry name" value="RF_PROK_I"/>
    <property type="match status" value="1"/>
</dbReference>
<keyword id="KW-0963">Cytoplasm</keyword>
<keyword id="KW-0488">Methylation</keyword>
<keyword id="KW-0648">Protein biosynthesis</keyword>
<gene>
    <name evidence="1" type="primary">prfA</name>
    <name type="ordered locus">BMEA_A1923</name>
</gene>
<feature type="chain" id="PRO_1000193475" description="Peptide chain release factor 1">
    <location>
        <begin position="1"/>
        <end position="359"/>
    </location>
</feature>
<feature type="region of interest" description="Disordered" evidence="2">
    <location>
        <begin position="283"/>
        <end position="309"/>
    </location>
</feature>
<feature type="modified residue" description="N5-methylglutamine" evidence="1">
    <location>
        <position position="235"/>
    </location>
</feature>
<evidence type="ECO:0000255" key="1">
    <source>
        <dbReference type="HAMAP-Rule" id="MF_00093"/>
    </source>
</evidence>
<evidence type="ECO:0000256" key="2">
    <source>
        <dbReference type="SAM" id="MobiDB-lite"/>
    </source>
</evidence>
<accession>C0RFB5</accession>
<organism>
    <name type="scientific">Brucella melitensis biotype 2 (strain ATCC 23457)</name>
    <dbReference type="NCBI Taxonomy" id="546272"/>
    <lineage>
        <taxon>Bacteria</taxon>
        <taxon>Pseudomonadati</taxon>
        <taxon>Pseudomonadota</taxon>
        <taxon>Alphaproteobacteria</taxon>
        <taxon>Hyphomicrobiales</taxon>
        <taxon>Brucellaceae</taxon>
        <taxon>Brucella/Ochrobactrum group</taxon>
        <taxon>Brucella</taxon>
    </lineage>
</organism>
<sequence>MIALPQDRMDQLLKRFSMIESQMANNPDSDTYVKLASEYSELQDVVGKIRELSDARMEASDLAAMRDDASTDAEMRALAVEELPEVEKRIAVLEQDVQILLLPKDAADDKNAILEIRAGTGGLEAALFAGDLFRMYERYAAEKGWRVELVSASEGDAGGYKEIIATVSGKGVFSKLKFESGVHRVQRVPETEAGGRIHTSAATVAVLPEAEDIDIEIRNEDIRIDTMRASGAGGQHVNTTDSAVRITHIPTGIMVVQAEKSQHQNRARAMQILRARLYDMERQKAESERSQARRSQVGSGDRSERIRTYNFPQGRVTDHRINLTLYKLDRVMEGELDELVDALISDHQTALLAELGEQP</sequence>
<reference key="1">
    <citation type="submission" date="2009-03" db="EMBL/GenBank/DDBJ databases">
        <title>Brucella melitensis ATCC 23457 whole genome shotgun sequencing project.</title>
        <authorList>
            <person name="Setubal J.C."/>
            <person name="Boyle S."/>
            <person name="Crasta O.R."/>
            <person name="Gillespie J.J."/>
            <person name="Kenyon R.W."/>
            <person name="Lu J."/>
            <person name="Mane S."/>
            <person name="Nagrani S."/>
            <person name="Shallom J.M."/>
            <person name="Shallom S."/>
            <person name="Shukla M."/>
            <person name="Snyder E.E."/>
            <person name="Sobral B.W."/>
            <person name="Wattam A.R."/>
            <person name="Will R."/>
            <person name="Williams K."/>
            <person name="Yoo H."/>
            <person name="Munk C."/>
            <person name="Tapia R."/>
            <person name="Han C."/>
            <person name="Detter J.C."/>
            <person name="Bruce D."/>
            <person name="Brettin T.S."/>
        </authorList>
    </citation>
    <scope>NUCLEOTIDE SEQUENCE [LARGE SCALE GENOMIC DNA]</scope>
    <source>
        <strain>ATCC 23457</strain>
    </source>
</reference>